<protein>
    <recommendedName>
        <fullName evidence="1">4-hydroxybenzoate octaprenyltransferase</fullName>
        <ecNumber evidence="1">2.5.1.39</ecNumber>
    </recommendedName>
    <alternativeName>
        <fullName evidence="1">4-HB polyprenyltransferase</fullName>
    </alternativeName>
</protein>
<sequence>MNLKQKWDVYSRLTRLDRPIGTLLLLWPCLMALVLAAGGMPDIKVLIIFIIGVVIMRACGCIINDYADRDLDSHVERTRSRPLASGEISTKEALLLFVILGLAAFGLVLLLNGLVVKLSVVGIILTIIYPFTKRVTNMPQMFLGVVWSWSIPMAYAAQTGEVPIEAWWLFAANWFWTVAYDTMYAMVDRDDDLKVGIKSTAILFGQYDRQIIGLFQFAALLCFIAAGWSADRGLLYGLGLLTFVGFSTYQQMLIFGRERAPCFKAFLNNNWAGLALFVGLGADYLF</sequence>
<feature type="chain" id="PRO_0000262840" description="4-hydroxybenzoate octaprenyltransferase">
    <location>
        <begin position="1"/>
        <end position="286"/>
    </location>
</feature>
<feature type="transmembrane region" description="Helical" evidence="1">
    <location>
        <begin position="21"/>
        <end position="40"/>
    </location>
</feature>
<feature type="transmembrane region" description="Helical" evidence="1">
    <location>
        <begin position="96"/>
        <end position="116"/>
    </location>
</feature>
<feature type="transmembrane region" description="Helical" evidence="1">
    <location>
        <begin position="142"/>
        <end position="162"/>
    </location>
</feature>
<feature type="transmembrane region" description="Helical" evidence="1">
    <location>
        <begin position="167"/>
        <end position="187"/>
    </location>
</feature>
<feature type="transmembrane region" description="Helical" evidence="1">
    <location>
        <begin position="210"/>
        <end position="230"/>
    </location>
</feature>
<feature type="transmembrane region" description="Helical" evidence="1">
    <location>
        <begin position="235"/>
        <end position="255"/>
    </location>
</feature>
<feature type="transmembrane region" description="Helical" evidence="1">
    <location>
        <begin position="266"/>
        <end position="286"/>
    </location>
</feature>
<accession>Q0HN13</accession>
<comment type="function">
    <text evidence="1">Catalyzes the prenylation of para-hydroxybenzoate (PHB) with an all-trans polyprenyl group. Mediates the second step in the final reaction sequence of ubiquinone-8 (UQ-8) biosynthesis, which is the condensation of the polyisoprenoid side chain with PHB, generating the first membrane-bound Q intermediate 3-octaprenyl-4-hydroxybenzoate.</text>
</comment>
<comment type="catalytic activity">
    <reaction evidence="1">
        <text>all-trans-octaprenyl diphosphate + 4-hydroxybenzoate = 4-hydroxy-3-(all-trans-octaprenyl)benzoate + diphosphate</text>
        <dbReference type="Rhea" id="RHEA:27782"/>
        <dbReference type="ChEBI" id="CHEBI:1617"/>
        <dbReference type="ChEBI" id="CHEBI:17879"/>
        <dbReference type="ChEBI" id="CHEBI:33019"/>
        <dbReference type="ChEBI" id="CHEBI:57711"/>
        <dbReference type="EC" id="2.5.1.39"/>
    </reaction>
</comment>
<comment type="cofactor">
    <cofactor evidence="1">
        <name>Mg(2+)</name>
        <dbReference type="ChEBI" id="CHEBI:18420"/>
    </cofactor>
</comment>
<comment type="pathway">
    <text evidence="1">Cofactor biosynthesis; ubiquinone biosynthesis.</text>
</comment>
<comment type="subcellular location">
    <subcellularLocation>
        <location evidence="1">Cell inner membrane</location>
        <topology evidence="1">Multi-pass membrane protein</topology>
    </subcellularLocation>
</comment>
<comment type="similarity">
    <text evidence="1">Belongs to the UbiA prenyltransferase family.</text>
</comment>
<name>UBIA_SHESM</name>
<dbReference type="EC" id="2.5.1.39" evidence="1"/>
<dbReference type="EMBL" id="CP000446">
    <property type="protein sequence ID" value="ABI37554.1"/>
    <property type="molecule type" value="Genomic_DNA"/>
</dbReference>
<dbReference type="RefSeq" id="WP_011621276.1">
    <property type="nucleotide sequence ID" value="NC_008321.1"/>
</dbReference>
<dbReference type="SMR" id="Q0HN13"/>
<dbReference type="KEGG" id="she:Shewmr4_0474"/>
<dbReference type="HOGENOM" id="CLU_034879_1_0_6"/>
<dbReference type="UniPathway" id="UPA00232"/>
<dbReference type="GO" id="GO:0005886">
    <property type="term" value="C:plasma membrane"/>
    <property type="evidence" value="ECO:0007669"/>
    <property type="project" value="UniProtKB-SubCell"/>
</dbReference>
<dbReference type="GO" id="GO:0008412">
    <property type="term" value="F:4-hydroxybenzoate polyprenyltransferase activity"/>
    <property type="evidence" value="ECO:0007669"/>
    <property type="project" value="UniProtKB-UniRule"/>
</dbReference>
<dbReference type="GO" id="GO:0006744">
    <property type="term" value="P:ubiquinone biosynthetic process"/>
    <property type="evidence" value="ECO:0007669"/>
    <property type="project" value="UniProtKB-UniRule"/>
</dbReference>
<dbReference type="CDD" id="cd13959">
    <property type="entry name" value="PT_UbiA_COQ2"/>
    <property type="match status" value="1"/>
</dbReference>
<dbReference type="FunFam" id="1.10.357.140:FF:000002">
    <property type="entry name" value="4-hydroxybenzoate octaprenyltransferase"/>
    <property type="match status" value="1"/>
</dbReference>
<dbReference type="FunFam" id="1.20.120.1780:FF:000001">
    <property type="entry name" value="4-hydroxybenzoate octaprenyltransferase"/>
    <property type="match status" value="1"/>
</dbReference>
<dbReference type="Gene3D" id="1.10.357.140">
    <property type="entry name" value="UbiA prenyltransferase"/>
    <property type="match status" value="1"/>
</dbReference>
<dbReference type="Gene3D" id="1.20.120.1780">
    <property type="entry name" value="UbiA prenyltransferase"/>
    <property type="match status" value="1"/>
</dbReference>
<dbReference type="HAMAP" id="MF_01635">
    <property type="entry name" value="UbiA"/>
    <property type="match status" value="1"/>
</dbReference>
<dbReference type="InterPro" id="IPR006370">
    <property type="entry name" value="HB_polyprenyltransferase-like"/>
</dbReference>
<dbReference type="InterPro" id="IPR039653">
    <property type="entry name" value="Prenyltransferase"/>
</dbReference>
<dbReference type="InterPro" id="IPR000537">
    <property type="entry name" value="UbiA_prenyltransferase"/>
</dbReference>
<dbReference type="InterPro" id="IPR030470">
    <property type="entry name" value="UbiA_prenylTrfase_CS"/>
</dbReference>
<dbReference type="InterPro" id="IPR044878">
    <property type="entry name" value="UbiA_sf"/>
</dbReference>
<dbReference type="NCBIfam" id="TIGR01474">
    <property type="entry name" value="ubiA_proteo"/>
    <property type="match status" value="1"/>
</dbReference>
<dbReference type="PANTHER" id="PTHR11048:SF28">
    <property type="entry name" value="4-HYDROXYBENZOATE POLYPRENYLTRANSFERASE, MITOCHONDRIAL"/>
    <property type="match status" value="1"/>
</dbReference>
<dbReference type="PANTHER" id="PTHR11048">
    <property type="entry name" value="PRENYLTRANSFERASES"/>
    <property type="match status" value="1"/>
</dbReference>
<dbReference type="Pfam" id="PF01040">
    <property type="entry name" value="UbiA"/>
    <property type="match status" value="1"/>
</dbReference>
<dbReference type="PROSITE" id="PS00943">
    <property type="entry name" value="UBIA"/>
    <property type="match status" value="1"/>
</dbReference>
<evidence type="ECO:0000255" key="1">
    <source>
        <dbReference type="HAMAP-Rule" id="MF_01635"/>
    </source>
</evidence>
<gene>
    <name evidence="1" type="primary">ubiA</name>
    <name type="ordered locus">Shewmr4_0474</name>
</gene>
<keyword id="KW-0997">Cell inner membrane</keyword>
<keyword id="KW-1003">Cell membrane</keyword>
<keyword id="KW-0460">Magnesium</keyword>
<keyword id="KW-0472">Membrane</keyword>
<keyword id="KW-0808">Transferase</keyword>
<keyword id="KW-0812">Transmembrane</keyword>
<keyword id="KW-1133">Transmembrane helix</keyword>
<keyword id="KW-0831">Ubiquinone biosynthesis</keyword>
<organism>
    <name type="scientific">Shewanella sp. (strain MR-4)</name>
    <dbReference type="NCBI Taxonomy" id="60480"/>
    <lineage>
        <taxon>Bacteria</taxon>
        <taxon>Pseudomonadati</taxon>
        <taxon>Pseudomonadota</taxon>
        <taxon>Gammaproteobacteria</taxon>
        <taxon>Alteromonadales</taxon>
        <taxon>Shewanellaceae</taxon>
        <taxon>Shewanella</taxon>
    </lineage>
</organism>
<reference key="1">
    <citation type="submission" date="2006-08" db="EMBL/GenBank/DDBJ databases">
        <title>Complete sequence of Shewanella sp. MR-4.</title>
        <authorList>
            <consortium name="US DOE Joint Genome Institute"/>
            <person name="Copeland A."/>
            <person name="Lucas S."/>
            <person name="Lapidus A."/>
            <person name="Barry K."/>
            <person name="Detter J.C."/>
            <person name="Glavina del Rio T."/>
            <person name="Hammon N."/>
            <person name="Israni S."/>
            <person name="Dalin E."/>
            <person name="Tice H."/>
            <person name="Pitluck S."/>
            <person name="Kiss H."/>
            <person name="Brettin T."/>
            <person name="Bruce D."/>
            <person name="Han C."/>
            <person name="Tapia R."/>
            <person name="Gilna P."/>
            <person name="Schmutz J."/>
            <person name="Larimer F."/>
            <person name="Land M."/>
            <person name="Hauser L."/>
            <person name="Kyrpides N."/>
            <person name="Mikhailova N."/>
            <person name="Nealson K."/>
            <person name="Konstantinidis K."/>
            <person name="Klappenbach J."/>
            <person name="Tiedje J."/>
            <person name="Richardson P."/>
        </authorList>
    </citation>
    <scope>NUCLEOTIDE SEQUENCE [LARGE SCALE GENOMIC DNA]</scope>
    <source>
        <strain>MR-4</strain>
    </source>
</reference>
<proteinExistence type="inferred from homology"/>